<sequence>MSLLNDIDQLSQVRTDWTRETAGEIYRAPFNDLIFAAQSVHRQCHPANQVQTSQLLSIKTGGCAEDCGYCNQSAHFDTGLKASKLMPLDDVLDAAKKAKDGGATRFCMGAAWRELKTRDEDVICDMISGVKSMGMETCVTLGMLTDSQANKLREAGLDYYNHNLDTAPEDYGRVISTRTYQDRIDTLSRVRGAGIHVCTGGIVGMGEDEAARIGLLTELASMDPHPESVPINHLVAVPNTPLGDSKPLDGIEFVRTIATARILMPRSMVRLSAGREGMSRELQALCFLAGANSIFVGEELLTTPNPEQNEDFDLFKSLGIEPMRLGETGTVPAE</sequence>
<keyword id="KW-0001">2Fe-2S</keyword>
<keyword id="KW-0004">4Fe-4S</keyword>
<keyword id="KW-0093">Biotin biosynthesis</keyword>
<keyword id="KW-0408">Iron</keyword>
<keyword id="KW-0411">Iron-sulfur</keyword>
<keyword id="KW-0479">Metal-binding</keyword>
<keyword id="KW-1185">Reference proteome</keyword>
<keyword id="KW-0949">S-adenosyl-L-methionine</keyword>
<keyword id="KW-0808">Transferase</keyword>
<protein>
    <recommendedName>
        <fullName evidence="1">Biotin synthase</fullName>
        <ecNumber evidence="1">2.8.1.6</ecNumber>
    </recommendedName>
</protein>
<accession>Q0ATN3</accession>
<comment type="function">
    <text evidence="1">Catalyzes the conversion of dethiobiotin (DTB) to biotin by the insertion of a sulfur atom into dethiobiotin via a radical-based mechanism.</text>
</comment>
<comment type="catalytic activity">
    <reaction evidence="1">
        <text>(4R,5S)-dethiobiotin + (sulfur carrier)-SH + 2 reduced [2Fe-2S]-[ferredoxin] + 2 S-adenosyl-L-methionine = (sulfur carrier)-H + biotin + 2 5'-deoxyadenosine + 2 L-methionine + 2 oxidized [2Fe-2S]-[ferredoxin]</text>
        <dbReference type="Rhea" id="RHEA:22060"/>
        <dbReference type="Rhea" id="RHEA-COMP:10000"/>
        <dbReference type="Rhea" id="RHEA-COMP:10001"/>
        <dbReference type="Rhea" id="RHEA-COMP:14737"/>
        <dbReference type="Rhea" id="RHEA-COMP:14739"/>
        <dbReference type="ChEBI" id="CHEBI:17319"/>
        <dbReference type="ChEBI" id="CHEBI:29917"/>
        <dbReference type="ChEBI" id="CHEBI:33737"/>
        <dbReference type="ChEBI" id="CHEBI:33738"/>
        <dbReference type="ChEBI" id="CHEBI:57586"/>
        <dbReference type="ChEBI" id="CHEBI:57844"/>
        <dbReference type="ChEBI" id="CHEBI:59789"/>
        <dbReference type="ChEBI" id="CHEBI:64428"/>
        <dbReference type="ChEBI" id="CHEBI:149473"/>
        <dbReference type="EC" id="2.8.1.6"/>
    </reaction>
</comment>
<comment type="cofactor">
    <cofactor evidence="1">
        <name>[4Fe-4S] cluster</name>
        <dbReference type="ChEBI" id="CHEBI:49883"/>
    </cofactor>
    <text evidence="1">Binds 1 [4Fe-4S] cluster. The cluster is coordinated with 3 cysteines and an exchangeable S-adenosyl-L-methionine.</text>
</comment>
<comment type="cofactor">
    <cofactor evidence="1">
        <name>[2Fe-2S] cluster</name>
        <dbReference type="ChEBI" id="CHEBI:190135"/>
    </cofactor>
    <text evidence="1">Binds 1 [2Fe-2S] cluster. The cluster is coordinated with 3 cysteines and 1 arginine.</text>
</comment>
<comment type="pathway">
    <text evidence="1">Cofactor biosynthesis; biotin biosynthesis; biotin from 7,8-diaminononanoate: step 2/2.</text>
</comment>
<comment type="subunit">
    <text evidence="1">Homodimer.</text>
</comment>
<comment type="similarity">
    <text evidence="1">Belongs to the radical SAM superfamily. Biotin synthase family.</text>
</comment>
<name>BIOB_MARMM</name>
<evidence type="ECO:0000255" key="1">
    <source>
        <dbReference type="HAMAP-Rule" id="MF_01694"/>
    </source>
</evidence>
<evidence type="ECO:0000255" key="2">
    <source>
        <dbReference type="PROSITE-ProRule" id="PRU01266"/>
    </source>
</evidence>
<feature type="chain" id="PRO_0000381455" description="Biotin synthase">
    <location>
        <begin position="1"/>
        <end position="334"/>
    </location>
</feature>
<feature type="domain" description="Radical SAM core" evidence="2">
    <location>
        <begin position="48"/>
        <end position="275"/>
    </location>
</feature>
<feature type="binding site" evidence="1">
    <location>
        <position position="63"/>
    </location>
    <ligand>
        <name>[4Fe-4S] cluster</name>
        <dbReference type="ChEBI" id="CHEBI:49883"/>
        <note>4Fe-4S-S-AdoMet</note>
    </ligand>
</feature>
<feature type="binding site" evidence="1">
    <location>
        <position position="67"/>
    </location>
    <ligand>
        <name>[4Fe-4S] cluster</name>
        <dbReference type="ChEBI" id="CHEBI:49883"/>
        <note>4Fe-4S-S-AdoMet</note>
    </ligand>
</feature>
<feature type="binding site" evidence="1">
    <location>
        <position position="70"/>
    </location>
    <ligand>
        <name>[4Fe-4S] cluster</name>
        <dbReference type="ChEBI" id="CHEBI:49883"/>
        <note>4Fe-4S-S-AdoMet</note>
    </ligand>
</feature>
<feature type="binding site" evidence="1">
    <location>
        <position position="107"/>
    </location>
    <ligand>
        <name>[2Fe-2S] cluster</name>
        <dbReference type="ChEBI" id="CHEBI:190135"/>
    </ligand>
</feature>
<feature type="binding site" evidence="1">
    <location>
        <position position="138"/>
    </location>
    <ligand>
        <name>[2Fe-2S] cluster</name>
        <dbReference type="ChEBI" id="CHEBI:190135"/>
    </ligand>
</feature>
<feature type="binding site" evidence="1">
    <location>
        <position position="198"/>
    </location>
    <ligand>
        <name>[2Fe-2S] cluster</name>
        <dbReference type="ChEBI" id="CHEBI:190135"/>
    </ligand>
</feature>
<feature type="binding site" evidence="1">
    <location>
        <position position="270"/>
    </location>
    <ligand>
        <name>[2Fe-2S] cluster</name>
        <dbReference type="ChEBI" id="CHEBI:190135"/>
    </ligand>
</feature>
<gene>
    <name evidence="1" type="primary">bioB</name>
    <name type="ordered locus">Mmar10_0058</name>
</gene>
<reference key="1">
    <citation type="submission" date="2006-08" db="EMBL/GenBank/DDBJ databases">
        <title>Complete sequence of Maricaulis maris MCS10.</title>
        <authorList>
            <consortium name="US DOE Joint Genome Institute"/>
            <person name="Copeland A."/>
            <person name="Lucas S."/>
            <person name="Lapidus A."/>
            <person name="Barry K."/>
            <person name="Detter J.C."/>
            <person name="Glavina del Rio T."/>
            <person name="Hammon N."/>
            <person name="Israni S."/>
            <person name="Dalin E."/>
            <person name="Tice H."/>
            <person name="Pitluck S."/>
            <person name="Saunders E."/>
            <person name="Brettin T."/>
            <person name="Bruce D."/>
            <person name="Han C."/>
            <person name="Tapia R."/>
            <person name="Gilna P."/>
            <person name="Schmutz J."/>
            <person name="Larimer F."/>
            <person name="Land M."/>
            <person name="Hauser L."/>
            <person name="Kyrpides N."/>
            <person name="Mikhailova N."/>
            <person name="Viollier P."/>
            <person name="Stephens C."/>
            <person name="Richardson P."/>
        </authorList>
    </citation>
    <scope>NUCLEOTIDE SEQUENCE [LARGE SCALE GENOMIC DNA]</scope>
    <source>
        <strain>MCS10</strain>
    </source>
</reference>
<dbReference type="EC" id="2.8.1.6" evidence="1"/>
<dbReference type="EMBL" id="CP000449">
    <property type="protein sequence ID" value="ABI64354.1"/>
    <property type="molecule type" value="Genomic_DNA"/>
</dbReference>
<dbReference type="RefSeq" id="WP_011642001.1">
    <property type="nucleotide sequence ID" value="NC_008347.1"/>
</dbReference>
<dbReference type="SMR" id="Q0ATN3"/>
<dbReference type="STRING" id="394221.Mmar10_0058"/>
<dbReference type="KEGG" id="mmr:Mmar10_0058"/>
<dbReference type="eggNOG" id="COG0502">
    <property type="taxonomic scope" value="Bacteria"/>
</dbReference>
<dbReference type="HOGENOM" id="CLU_033172_1_2_5"/>
<dbReference type="OrthoDB" id="9786826at2"/>
<dbReference type="UniPathway" id="UPA00078">
    <property type="reaction ID" value="UER00162"/>
</dbReference>
<dbReference type="Proteomes" id="UP000001964">
    <property type="component" value="Chromosome"/>
</dbReference>
<dbReference type="GO" id="GO:0051537">
    <property type="term" value="F:2 iron, 2 sulfur cluster binding"/>
    <property type="evidence" value="ECO:0007669"/>
    <property type="project" value="UniProtKB-KW"/>
</dbReference>
<dbReference type="GO" id="GO:0051539">
    <property type="term" value="F:4 iron, 4 sulfur cluster binding"/>
    <property type="evidence" value="ECO:0007669"/>
    <property type="project" value="UniProtKB-KW"/>
</dbReference>
<dbReference type="GO" id="GO:0004076">
    <property type="term" value="F:biotin synthase activity"/>
    <property type="evidence" value="ECO:0007669"/>
    <property type="project" value="UniProtKB-UniRule"/>
</dbReference>
<dbReference type="GO" id="GO:0005506">
    <property type="term" value="F:iron ion binding"/>
    <property type="evidence" value="ECO:0007669"/>
    <property type="project" value="UniProtKB-UniRule"/>
</dbReference>
<dbReference type="GO" id="GO:0009102">
    <property type="term" value="P:biotin biosynthetic process"/>
    <property type="evidence" value="ECO:0007669"/>
    <property type="project" value="UniProtKB-UniRule"/>
</dbReference>
<dbReference type="CDD" id="cd01335">
    <property type="entry name" value="Radical_SAM"/>
    <property type="match status" value="1"/>
</dbReference>
<dbReference type="FunFam" id="3.20.20.70:FF:000011">
    <property type="entry name" value="Biotin synthase"/>
    <property type="match status" value="1"/>
</dbReference>
<dbReference type="Gene3D" id="3.20.20.70">
    <property type="entry name" value="Aldolase class I"/>
    <property type="match status" value="1"/>
</dbReference>
<dbReference type="HAMAP" id="MF_01694">
    <property type="entry name" value="BioB"/>
    <property type="match status" value="1"/>
</dbReference>
<dbReference type="InterPro" id="IPR013785">
    <property type="entry name" value="Aldolase_TIM"/>
</dbReference>
<dbReference type="InterPro" id="IPR010722">
    <property type="entry name" value="BATS_dom"/>
</dbReference>
<dbReference type="InterPro" id="IPR002684">
    <property type="entry name" value="Biotin_synth/BioAB"/>
</dbReference>
<dbReference type="InterPro" id="IPR024177">
    <property type="entry name" value="Biotin_synthase"/>
</dbReference>
<dbReference type="InterPro" id="IPR006638">
    <property type="entry name" value="Elp3/MiaA/NifB-like_rSAM"/>
</dbReference>
<dbReference type="InterPro" id="IPR007197">
    <property type="entry name" value="rSAM"/>
</dbReference>
<dbReference type="NCBIfam" id="TIGR00433">
    <property type="entry name" value="bioB"/>
    <property type="match status" value="1"/>
</dbReference>
<dbReference type="PANTHER" id="PTHR22976">
    <property type="entry name" value="BIOTIN SYNTHASE"/>
    <property type="match status" value="1"/>
</dbReference>
<dbReference type="PANTHER" id="PTHR22976:SF2">
    <property type="entry name" value="BIOTIN SYNTHASE, MITOCHONDRIAL"/>
    <property type="match status" value="1"/>
</dbReference>
<dbReference type="Pfam" id="PF06968">
    <property type="entry name" value="BATS"/>
    <property type="match status" value="1"/>
</dbReference>
<dbReference type="Pfam" id="PF04055">
    <property type="entry name" value="Radical_SAM"/>
    <property type="match status" value="1"/>
</dbReference>
<dbReference type="PIRSF" id="PIRSF001619">
    <property type="entry name" value="Biotin_synth"/>
    <property type="match status" value="1"/>
</dbReference>
<dbReference type="SFLD" id="SFLDF00272">
    <property type="entry name" value="biotin_synthase"/>
    <property type="match status" value="1"/>
</dbReference>
<dbReference type="SFLD" id="SFLDS00029">
    <property type="entry name" value="Radical_SAM"/>
    <property type="match status" value="1"/>
</dbReference>
<dbReference type="SMART" id="SM00876">
    <property type="entry name" value="BATS"/>
    <property type="match status" value="1"/>
</dbReference>
<dbReference type="SMART" id="SM00729">
    <property type="entry name" value="Elp3"/>
    <property type="match status" value="1"/>
</dbReference>
<dbReference type="SUPFAM" id="SSF102114">
    <property type="entry name" value="Radical SAM enzymes"/>
    <property type="match status" value="1"/>
</dbReference>
<dbReference type="PROSITE" id="PS51918">
    <property type="entry name" value="RADICAL_SAM"/>
    <property type="match status" value="1"/>
</dbReference>
<organism>
    <name type="scientific">Maricaulis maris (strain MCS10)</name>
    <name type="common">Caulobacter maris</name>
    <dbReference type="NCBI Taxonomy" id="394221"/>
    <lineage>
        <taxon>Bacteria</taxon>
        <taxon>Pseudomonadati</taxon>
        <taxon>Pseudomonadota</taxon>
        <taxon>Alphaproteobacteria</taxon>
        <taxon>Maricaulales</taxon>
        <taxon>Maricaulaceae</taxon>
        <taxon>Maricaulis</taxon>
    </lineage>
</organism>
<proteinExistence type="inferred from homology"/>